<comment type="function">
    <text evidence="1">Component of the proteasome core, a large protease complex with broad specificity involved in protein degradation.</text>
</comment>
<comment type="catalytic activity">
    <reaction evidence="1">
        <text>Cleavage of peptide bonds with very broad specificity.</text>
        <dbReference type="EC" id="3.4.25.1"/>
    </reaction>
</comment>
<comment type="activity regulation">
    <text evidence="1">The formation of the proteasomal ATPase PAN-20S proteasome complex, via the docking of the C-termini of PAN into the intersubunit pockets in the alpha-rings, triggers opening of the gate for substrate entry. Interconversion between the open-gate and close-gate conformations leads to a dynamic regulation of the 20S proteasome proteolysis activity.</text>
</comment>
<comment type="subunit">
    <text evidence="1">The 20S proteasome core is composed of 14 alpha and 14 beta subunits that assemble into four stacked heptameric rings, resulting in a barrel-shaped structure. The two inner rings, each composed of seven catalytic beta subunits, are sandwiched by two outer rings, each composed of seven alpha subunits. The catalytic chamber with the active sites is on the inside of the barrel. Has a gated structure, the ends of the cylinder being occluded by the N-termini of the alpha-subunits. Is capped at one or both ends by the proteasome regulatory ATPase, PAN.</text>
</comment>
<comment type="subcellular location">
    <subcellularLocation>
        <location evidence="1">Cytoplasm</location>
    </subcellularLocation>
</comment>
<comment type="similarity">
    <text evidence="1">Belongs to the peptidase T1B family.</text>
</comment>
<comment type="sequence caution" evidence="2">
    <conflict type="erroneous initiation">
        <sequence resource="EMBL-CDS" id="AAK41063"/>
    </conflict>
</comment>
<comment type="sequence caution" evidence="2">
    <conflict type="erroneous initiation">
        <sequence resource="EMBL-CDS" id="CAB57537"/>
    </conflict>
</comment>
<keyword id="KW-0068">Autocatalytic cleavage</keyword>
<keyword id="KW-0963">Cytoplasm</keyword>
<keyword id="KW-0378">Hydrolase</keyword>
<keyword id="KW-0645">Protease</keyword>
<keyword id="KW-0647">Proteasome</keyword>
<keyword id="KW-1185">Reference proteome</keyword>
<keyword id="KW-0888">Threonine protease</keyword>
<keyword id="KW-0865">Zymogen</keyword>
<sequence length="208" mass="22927">MGNELQLENKILKGTTTVGIRVNDGVILAADRRASAGFFVANKMVRKVLYITDKIGITTAGSVADLQFIYDVLKNIYHYNSITKYGPISIKGIATRLANVLSATKYFPYIVQILIGGYDDQPRLFNLDYLGDITEENYVATGSGSPVAMGVLEDEYNPKMTLDEAADLAKRAVFSAIKRDSFTGTGVIVAKIHSKGHEELEFYLNKKM</sequence>
<protein>
    <recommendedName>
        <fullName evidence="1">Proteasome subunit beta 2</fullName>
        <ecNumber evidence="1">3.4.25.1</ecNumber>
    </recommendedName>
    <alternativeName>
        <fullName evidence="1">20S proteasome beta subunit 2</fullName>
    </alternativeName>
    <alternativeName>
        <fullName evidence="1">Proteasome core protein PsmB 2</fullName>
    </alternativeName>
</protein>
<reference key="1">
    <citation type="journal article" date="2000" name="Genome">
        <title>Gene content and organization of a 281-kbp contig from the genome of the extremely thermophilic archaeon, Sulfolobus solfataricus P2.</title>
        <authorList>
            <person name="Charlebois R.L."/>
            <person name="Singh R.K."/>
            <person name="Chan-Weiher C.C.-Y."/>
            <person name="Allard G."/>
            <person name="Chow C."/>
            <person name="Confalonieri F."/>
            <person name="Curtis B."/>
            <person name="Duguet M."/>
            <person name="Erauso G."/>
            <person name="Faguy D."/>
            <person name="Gaasterland T."/>
            <person name="Garrett R.A."/>
            <person name="Gordon P."/>
            <person name="Jeffries A.C."/>
            <person name="Kozera C."/>
            <person name="Kushwaha N."/>
            <person name="Lafleur E."/>
            <person name="Medina N."/>
            <person name="Peng X."/>
            <person name="Penny S.L."/>
            <person name="She Q."/>
            <person name="St Jean A."/>
            <person name="van der Oost J."/>
            <person name="Young F."/>
            <person name="Zivanovic Y."/>
            <person name="Doolittle W.F."/>
            <person name="Ragan M.A."/>
            <person name="Sensen C.W."/>
        </authorList>
    </citation>
    <scope>NUCLEOTIDE SEQUENCE [LARGE SCALE GENOMIC DNA]</scope>
    <source>
        <strain>ATCC 35092 / DSM 1617 / JCM 11322 / P2</strain>
    </source>
</reference>
<reference key="2">
    <citation type="journal article" date="2001" name="Proc. Natl. Acad. Sci. U.S.A.">
        <title>The complete genome of the crenarchaeon Sulfolobus solfataricus P2.</title>
        <authorList>
            <person name="She Q."/>
            <person name="Singh R.K."/>
            <person name="Confalonieri F."/>
            <person name="Zivanovic Y."/>
            <person name="Allard G."/>
            <person name="Awayez M.J."/>
            <person name="Chan-Weiher C.C.-Y."/>
            <person name="Clausen I.G."/>
            <person name="Curtis B.A."/>
            <person name="De Moors A."/>
            <person name="Erauso G."/>
            <person name="Fletcher C."/>
            <person name="Gordon P.M.K."/>
            <person name="Heikamp-de Jong I."/>
            <person name="Jeffries A.C."/>
            <person name="Kozera C.J."/>
            <person name="Medina N."/>
            <person name="Peng X."/>
            <person name="Thi-Ngoc H.P."/>
            <person name="Redder P."/>
            <person name="Schenk M.E."/>
            <person name="Theriault C."/>
            <person name="Tolstrup N."/>
            <person name="Charlebois R.L."/>
            <person name="Doolittle W.F."/>
            <person name="Duguet M."/>
            <person name="Gaasterland T."/>
            <person name="Garrett R.A."/>
            <person name="Ragan M.A."/>
            <person name="Sensen C.W."/>
            <person name="Van der Oost J."/>
        </authorList>
    </citation>
    <scope>NUCLEOTIDE SEQUENCE [LARGE SCALE GENOMIC DNA]</scope>
    <source>
        <strain>ATCC 35092 / DSM 1617 / JCM 11322 / P2</strain>
    </source>
</reference>
<gene>
    <name evidence="1" type="primary">psmB2</name>
    <name type="ordered locus">SSO0766</name>
    <name type="ORF">C40_002</name>
</gene>
<name>PSB2_SACS2</name>
<accession>Q9UXF3</accession>
<organism>
    <name type="scientific">Saccharolobus solfataricus (strain ATCC 35092 / DSM 1617 / JCM 11322 / P2)</name>
    <name type="common">Sulfolobus solfataricus</name>
    <dbReference type="NCBI Taxonomy" id="273057"/>
    <lineage>
        <taxon>Archaea</taxon>
        <taxon>Thermoproteota</taxon>
        <taxon>Thermoprotei</taxon>
        <taxon>Sulfolobales</taxon>
        <taxon>Sulfolobaceae</taxon>
        <taxon>Saccharolobus</taxon>
    </lineage>
</organism>
<dbReference type="EC" id="3.4.25.1" evidence="1"/>
<dbReference type="EMBL" id="Y18930">
    <property type="protein sequence ID" value="CAB57537.1"/>
    <property type="status" value="ALT_INIT"/>
    <property type="molecule type" value="Genomic_DNA"/>
</dbReference>
<dbReference type="EMBL" id="AE006641">
    <property type="protein sequence ID" value="AAK41063.1"/>
    <property type="status" value="ALT_INIT"/>
    <property type="molecule type" value="Genomic_DNA"/>
</dbReference>
<dbReference type="PIR" id="H90225">
    <property type="entry name" value="H90225"/>
</dbReference>
<dbReference type="SMR" id="Q9UXF3"/>
<dbReference type="FunCoup" id="Q9UXF3">
    <property type="interactions" value="246"/>
</dbReference>
<dbReference type="STRING" id="273057.SSO0766"/>
<dbReference type="MEROPS" id="T01.002"/>
<dbReference type="PaxDb" id="273057-SSO0766"/>
<dbReference type="EnsemblBacteria" id="AAK41063">
    <property type="protein sequence ID" value="AAK41063"/>
    <property type="gene ID" value="SSO0766"/>
</dbReference>
<dbReference type="KEGG" id="sso:SSO0766"/>
<dbReference type="PATRIC" id="fig|273057.12.peg.765"/>
<dbReference type="eggNOG" id="arCOG00970">
    <property type="taxonomic scope" value="Archaea"/>
</dbReference>
<dbReference type="HOGENOM" id="CLU_035750_7_2_2"/>
<dbReference type="InParanoid" id="Q9UXF3"/>
<dbReference type="PhylomeDB" id="Q9UXF3"/>
<dbReference type="Proteomes" id="UP000001974">
    <property type="component" value="Chromosome"/>
</dbReference>
<dbReference type="GO" id="GO:0005829">
    <property type="term" value="C:cytosol"/>
    <property type="evidence" value="ECO:0000318"/>
    <property type="project" value="GO_Central"/>
</dbReference>
<dbReference type="GO" id="GO:0019774">
    <property type="term" value="C:proteasome core complex, beta-subunit complex"/>
    <property type="evidence" value="ECO:0000250"/>
    <property type="project" value="UniProtKB"/>
</dbReference>
<dbReference type="GO" id="GO:0004175">
    <property type="term" value="F:endopeptidase activity"/>
    <property type="evidence" value="ECO:0000318"/>
    <property type="project" value="GO_Central"/>
</dbReference>
<dbReference type="GO" id="GO:0004298">
    <property type="term" value="F:threonine-type endopeptidase activity"/>
    <property type="evidence" value="ECO:0007669"/>
    <property type="project" value="UniProtKB-UniRule"/>
</dbReference>
<dbReference type="GO" id="GO:0043161">
    <property type="term" value="P:proteasome-mediated ubiquitin-dependent protein catabolic process"/>
    <property type="evidence" value="ECO:0000318"/>
    <property type="project" value="GO_Central"/>
</dbReference>
<dbReference type="CDD" id="cd03764">
    <property type="entry name" value="proteasome_beta_archeal"/>
    <property type="match status" value="1"/>
</dbReference>
<dbReference type="FunFam" id="3.60.20.10:FF:000049">
    <property type="entry name" value="Proteasome subunit beta"/>
    <property type="match status" value="1"/>
</dbReference>
<dbReference type="Gene3D" id="3.60.20.10">
    <property type="entry name" value="Glutamine Phosphoribosylpyrophosphate, subunit 1, domain 1"/>
    <property type="match status" value="1"/>
</dbReference>
<dbReference type="HAMAP" id="MF_02113_A">
    <property type="entry name" value="Proteasome_B_A"/>
    <property type="match status" value="1"/>
</dbReference>
<dbReference type="InterPro" id="IPR029055">
    <property type="entry name" value="Ntn_hydrolases_N"/>
</dbReference>
<dbReference type="InterPro" id="IPR019983">
    <property type="entry name" value="Pept_T1A_Psome_bsu_arc"/>
</dbReference>
<dbReference type="InterPro" id="IPR000243">
    <property type="entry name" value="Pept_T1A_subB"/>
</dbReference>
<dbReference type="InterPro" id="IPR016050">
    <property type="entry name" value="Proteasome_bsu_CS"/>
</dbReference>
<dbReference type="InterPro" id="IPR001353">
    <property type="entry name" value="Proteasome_sua/b"/>
</dbReference>
<dbReference type="InterPro" id="IPR023333">
    <property type="entry name" value="Proteasome_suB-type"/>
</dbReference>
<dbReference type="NCBIfam" id="TIGR03634">
    <property type="entry name" value="arc_protsome_B"/>
    <property type="match status" value="1"/>
</dbReference>
<dbReference type="PANTHER" id="PTHR32194:SF0">
    <property type="entry name" value="ATP-DEPENDENT PROTEASE SUBUNIT HSLV"/>
    <property type="match status" value="1"/>
</dbReference>
<dbReference type="PANTHER" id="PTHR32194">
    <property type="entry name" value="METALLOPROTEASE TLDD"/>
    <property type="match status" value="1"/>
</dbReference>
<dbReference type="Pfam" id="PF00227">
    <property type="entry name" value="Proteasome"/>
    <property type="match status" value="1"/>
</dbReference>
<dbReference type="PRINTS" id="PR00141">
    <property type="entry name" value="PROTEASOME"/>
</dbReference>
<dbReference type="SUPFAM" id="SSF56235">
    <property type="entry name" value="N-terminal nucleophile aminohydrolases (Ntn hydrolases)"/>
    <property type="match status" value="1"/>
</dbReference>
<dbReference type="PROSITE" id="PS00854">
    <property type="entry name" value="PROTEASOME_BETA_1"/>
    <property type="match status" value="1"/>
</dbReference>
<dbReference type="PROSITE" id="PS51476">
    <property type="entry name" value="PROTEASOME_BETA_2"/>
    <property type="match status" value="1"/>
</dbReference>
<feature type="propeptide" id="PRO_0000026673" description="Removed in mature form; by autocatalysis" evidence="1">
    <location>
        <begin position="1"/>
        <end position="14"/>
    </location>
</feature>
<feature type="chain" id="PRO_0000026674" description="Proteasome subunit beta 2">
    <location>
        <begin position="15"/>
        <end position="208"/>
    </location>
</feature>
<feature type="active site" description="Nucleophile" evidence="1">
    <location>
        <position position="15"/>
    </location>
</feature>
<evidence type="ECO:0000255" key="1">
    <source>
        <dbReference type="HAMAP-Rule" id="MF_02113"/>
    </source>
</evidence>
<evidence type="ECO:0000305" key="2"/>
<proteinExistence type="inferred from homology"/>